<proteinExistence type="inferred from homology"/>
<organism>
    <name type="scientific">Methanoculleus marisnigri (strain ATCC 35101 / DSM 1498 / JR1)</name>
    <dbReference type="NCBI Taxonomy" id="368407"/>
    <lineage>
        <taxon>Archaea</taxon>
        <taxon>Methanobacteriati</taxon>
        <taxon>Methanobacteriota</taxon>
        <taxon>Stenosarchaea group</taxon>
        <taxon>Methanomicrobia</taxon>
        <taxon>Methanomicrobiales</taxon>
        <taxon>Methanomicrobiaceae</taxon>
        <taxon>Methanoculleus</taxon>
    </lineage>
</organism>
<gene>
    <name evidence="1" type="primary">dcd</name>
    <name type="ordered locus">Memar_0767</name>
</gene>
<accession>A3CTK0</accession>
<comment type="function">
    <text evidence="1">Bifunctional enzyme that catalyzes both the deamination of dCTP to dUTP and the hydrolysis of dUTP to dUMP without releasing the toxic dUTP intermediate.</text>
</comment>
<comment type="catalytic activity">
    <reaction evidence="1">
        <text>dCTP + 2 H2O = dUMP + NH4(+) + diphosphate</text>
        <dbReference type="Rhea" id="RHEA:19205"/>
        <dbReference type="ChEBI" id="CHEBI:15377"/>
        <dbReference type="ChEBI" id="CHEBI:28938"/>
        <dbReference type="ChEBI" id="CHEBI:33019"/>
        <dbReference type="ChEBI" id="CHEBI:61481"/>
        <dbReference type="ChEBI" id="CHEBI:246422"/>
        <dbReference type="EC" id="3.5.4.30"/>
    </reaction>
</comment>
<comment type="pathway">
    <text evidence="1">Pyrimidine metabolism; dUMP biosynthesis; dUMP from dCTP: step 1/1.</text>
</comment>
<comment type="subunit">
    <text evidence="1">Homotrimer.</text>
</comment>
<comment type="similarity">
    <text evidence="1">Belongs to the dCTP deaminase family.</text>
</comment>
<keyword id="KW-0378">Hydrolase</keyword>
<keyword id="KW-0546">Nucleotide metabolism</keyword>
<keyword id="KW-0547">Nucleotide-binding</keyword>
<protein>
    <recommendedName>
        <fullName evidence="1">dCTP deaminase, dUMP-forming</fullName>
        <ecNumber evidence="1">3.5.4.30</ecNumber>
    </recommendedName>
    <alternativeName>
        <fullName evidence="1">Bifunctional dCTP deaminase:dUTPase</fullName>
    </alternativeName>
    <alternativeName>
        <fullName evidence="1">DCD-DUT</fullName>
    </alternativeName>
</protein>
<feature type="chain" id="PRO_1000117984" description="dCTP deaminase, dUMP-forming">
    <location>
        <begin position="1"/>
        <end position="187"/>
    </location>
</feature>
<feature type="active site" description="Proton donor/acceptor" evidence="1">
    <location>
        <position position="127"/>
    </location>
</feature>
<feature type="binding site" evidence="1">
    <location>
        <begin position="99"/>
        <end position="104"/>
    </location>
    <ligand>
        <name>dCTP</name>
        <dbReference type="ChEBI" id="CHEBI:61481"/>
    </ligand>
</feature>
<feature type="binding site" evidence="1">
    <location>
        <position position="117"/>
    </location>
    <ligand>
        <name>dCTP</name>
        <dbReference type="ChEBI" id="CHEBI:61481"/>
    </ligand>
</feature>
<feature type="binding site" evidence="1">
    <location>
        <begin position="125"/>
        <end position="127"/>
    </location>
    <ligand>
        <name>dCTP</name>
        <dbReference type="ChEBI" id="CHEBI:61481"/>
    </ligand>
</feature>
<feature type="binding site" evidence="1">
    <location>
        <position position="146"/>
    </location>
    <ligand>
        <name>dCTP</name>
        <dbReference type="ChEBI" id="CHEBI:61481"/>
    </ligand>
</feature>
<feature type="binding site" evidence="1">
    <location>
        <position position="159"/>
    </location>
    <ligand>
        <name>dCTP</name>
        <dbReference type="ChEBI" id="CHEBI:61481"/>
    </ligand>
</feature>
<feature type="binding site" evidence="1">
    <location>
        <position position="166"/>
    </location>
    <ligand>
        <name>dCTP</name>
        <dbReference type="ChEBI" id="CHEBI:61481"/>
    </ligand>
</feature>
<feature type="binding site" evidence="1">
    <location>
        <position position="170"/>
    </location>
    <ligand>
        <name>dCTP</name>
        <dbReference type="ChEBI" id="CHEBI:61481"/>
    </ligand>
</feature>
<feature type="site" description="Important for bifunctional activity" evidence="1">
    <location>
        <begin position="114"/>
        <end position="115"/>
    </location>
</feature>
<evidence type="ECO:0000255" key="1">
    <source>
        <dbReference type="HAMAP-Rule" id="MF_00146"/>
    </source>
</evidence>
<sequence>MILVDWQIEDRIRRGHIRVDPFEPGLIQPNSLDIRLGSHFVWYVPGETVIDPYDSETVCRDTEEMVADSIVLAPGRFLLAETLEAIELPDDIVASIEGKSSIARLGVELHQTGGWIDAGFRGTITLEMCNVNSRPVKVYAGMPIGQLVFYRTDRAARPYNMKQDAKYMDQQQATLSRYHENARRAEE</sequence>
<name>DCDB_METMJ</name>
<reference key="1">
    <citation type="journal article" date="2009" name="Stand. Genomic Sci.">
        <title>Complete genome sequence of Methanoculleus marisnigri Romesser et al. 1981 type strain JR1.</title>
        <authorList>
            <person name="Anderson I.J."/>
            <person name="Sieprawska-Lupa M."/>
            <person name="Lapidus A."/>
            <person name="Nolan M."/>
            <person name="Copeland A."/>
            <person name="Glavina Del Rio T."/>
            <person name="Tice H."/>
            <person name="Dalin E."/>
            <person name="Barry K."/>
            <person name="Saunders E."/>
            <person name="Han C."/>
            <person name="Brettin T."/>
            <person name="Detter J.C."/>
            <person name="Bruce D."/>
            <person name="Mikhailova N."/>
            <person name="Pitluck S."/>
            <person name="Hauser L."/>
            <person name="Land M."/>
            <person name="Lucas S."/>
            <person name="Richardson P."/>
            <person name="Whitman W.B."/>
            <person name="Kyrpides N.C."/>
        </authorList>
    </citation>
    <scope>NUCLEOTIDE SEQUENCE [LARGE SCALE GENOMIC DNA]</scope>
    <source>
        <strain>ATCC 35101 / DSM 1498 / JR1</strain>
    </source>
</reference>
<dbReference type="EC" id="3.5.4.30" evidence="1"/>
<dbReference type="EMBL" id="CP000562">
    <property type="protein sequence ID" value="ABN56700.1"/>
    <property type="molecule type" value="Genomic_DNA"/>
</dbReference>
<dbReference type="RefSeq" id="WP_011843611.1">
    <property type="nucleotide sequence ID" value="NC_009051.1"/>
</dbReference>
<dbReference type="SMR" id="A3CTK0"/>
<dbReference type="STRING" id="368407.Memar_0767"/>
<dbReference type="GeneID" id="4847904"/>
<dbReference type="GeneID" id="76731337"/>
<dbReference type="KEGG" id="mem:Memar_0767"/>
<dbReference type="eggNOG" id="arCOG04048">
    <property type="taxonomic scope" value="Archaea"/>
</dbReference>
<dbReference type="HOGENOM" id="CLU_087476_2_0_2"/>
<dbReference type="OrthoDB" id="33242at2157"/>
<dbReference type="UniPathway" id="UPA00610">
    <property type="reaction ID" value="UER00667"/>
</dbReference>
<dbReference type="Proteomes" id="UP000002146">
    <property type="component" value="Chromosome"/>
</dbReference>
<dbReference type="GO" id="GO:0033973">
    <property type="term" value="F:dCTP deaminase (dUMP-forming) activity"/>
    <property type="evidence" value="ECO:0007669"/>
    <property type="project" value="UniProtKB-UniRule"/>
</dbReference>
<dbReference type="GO" id="GO:0008829">
    <property type="term" value="F:dCTP deaminase activity"/>
    <property type="evidence" value="ECO:0007669"/>
    <property type="project" value="InterPro"/>
</dbReference>
<dbReference type="GO" id="GO:0000166">
    <property type="term" value="F:nucleotide binding"/>
    <property type="evidence" value="ECO:0007669"/>
    <property type="project" value="UniProtKB-KW"/>
</dbReference>
<dbReference type="GO" id="GO:0006226">
    <property type="term" value="P:dUMP biosynthetic process"/>
    <property type="evidence" value="ECO:0007669"/>
    <property type="project" value="UniProtKB-UniRule"/>
</dbReference>
<dbReference type="GO" id="GO:0006229">
    <property type="term" value="P:dUTP biosynthetic process"/>
    <property type="evidence" value="ECO:0007669"/>
    <property type="project" value="InterPro"/>
</dbReference>
<dbReference type="CDD" id="cd07557">
    <property type="entry name" value="trimeric_dUTPase"/>
    <property type="match status" value="1"/>
</dbReference>
<dbReference type="Gene3D" id="2.70.40.10">
    <property type="match status" value="1"/>
</dbReference>
<dbReference type="HAMAP" id="MF_00146">
    <property type="entry name" value="dCTP_deaminase"/>
    <property type="match status" value="1"/>
</dbReference>
<dbReference type="InterPro" id="IPR011962">
    <property type="entry name" value="dCTP_deaminase"/>
</dbReference>
<dbReference type="InterPro" id="IPR036157">
    <property type="entry name" value="dUTPase-like_sf"/>
</dbReference>
<dbReference type="InterPro" id="IPR033704">
    <property type="entry name" value="dUTPase_trimeric"/>
</dbReference>
<dbReference type="NCBIfam" id="TIGR02274">
    <property type="entry name" value="dCTP_deam"/>
    <property type="match status" value="1"/>
</dbReference>
<dbReference type="PANTHER" id="PTHR42680">
    <property type="entry name" value="DCTP DEAMINASE"/>
    <property type="match status" value="1"/>
</dbReference>
<dbReference type="PANTHER" id="PTHR42680:SF3">
    <property type="entry name" value="DCTP DEAMINASE"/>
    <property type="match status" value="1"/>
</dbReference>
<dbReference type="Pfam" id="PF22769">
    <property type="entry name" value="DCD"/>
    <property type="match status" value="1"/>
</dbReference>
<dbReference type="SUPFAM" id="SSF51283">
    <property type="entry name" value="dUTPase-like"/>
    <property type="match status" value="1"/>
</dbReference>